<organism>
    <name type="scientific">Cryptococcus neoformans var. neoformans serotype D (strain B-3501A)</name>
    <name type="common">Filobasidiella neoformans</name>
    <dbReference type="NCBI Taxonomy" id="283643"/>
    <lineage>
        <taxon>Eukaryota</taxon>
        <taxon>Fungi</taxon>
        <taxon>Dikarya</taxon>
        <taxon>Basidiomycota</taxon>
        <taxon>Agaricomycotina</taxon>
        <taxon>Tremellomycetes</taxon>
        <taxon>Tremellales</taxon>
        <taxon>Cryptococcaceae</taxon>
        <taxon>Cryptococcus</taxon>
        <taxon>Cryptococcus neoformans species complex</taxon>
    </lineage>
</organism>
<dbReference type="EMBL" id="AAEY01000028">
    <property type="protein sequence ID" value="EAL20523.1"/>
    <property type="status" value="ALT_SEQ"/>
    <property type="molecule type" value="Genomic_DNA"/>
</dbReference>
<dbReference type="RefSeq" id="XP_775170.1">
    <property type="nucleotide sequence ID" value="XM_770077.1"/>
</dbReference>
<dbReference type="SMR" id="P0CN37"/>
<dbReference type="GeneID" id="4936454"/>
<dbReference type="KEGG" id="cnb:CNBE4430"/>
<dbReference type="HOGENOM" id="CLU_007481_0_0_1"/>
<dbReference type="OrthoDB" id="4837at5206"/>
<dbReference type="GO" id="GO:0072659">
    <property type="term" value="P:protein localization to plasma membrane"/>
    <property type="evidence" value="ECO:0007669"/>
    <property type="project" value="InterPro"/>
</dbReference>
<dbReference type="InterPro" id="IPR016024">
    <property type="entry name" value="ARM-type_fold"/>
</dbReference>
<dbReference type="InterPro" id="IPR039786">
    <property type="entry name" value="EFR3"/>
</dbReference>
<dbReference type="InterPro" id="IPR049150">
    <property type="entry name" value="EFR3_HEAT-like_rpt"/>
</dbReference>
<dbReference type="PANTHER" id="PTHR47766">
    <property type="entry name" value="PROTEIN EFR3"/>
    <property type="match status" value="1"/>
</dbReference>
<dbReference type="PANTHER" id="PTHR47766:SF1">
    <property type="entry name" value="PROTEIN EFR3"/>
    <property type="match status" value="1"/>
</dbReference>
<dbReference type="Pfam" id="PF21072">
    <property type="entry name" value="EFR3"/>
    <property type="match status" value="1"/>
</dbReference>
<dbReference type="SUPFAM" id="SSF48371">
    <property type="entry name" value="ARM repeat"/>
    <property type="match status" value="1"/>
</dbReference>
<accession>P0CN37</accession>
<accession>Q55RT8</accession>
<accession>Q5KG92</accession>
<reference key="1">
    <citation type="journal article" date="2005" name="Science">
        <title>The genome of the basidiomycetous yeast and human pathogen Cryptococcus neoformans.</title>
        <authorList>
            <person name="Loftus B.J."/>
            <person name="Fung E."/>
            <person name="Roncaglia P."/>
            <person name="Rowley D."/>
            <person name="Amedeo P."/>
            <person name="Bruno D."/>
            <person name="Vamathevan J."/>
            <person name="Miranda M."/>
            <person name="Anderson I.J."/>
            <person name="Fraser J.A."/>
            <person name="Allen J.E."/>
            <person name="Bosdet I.E."/>
            <person name="Brent M.R."/>
            <person name="Chiu R."/>
            <person name="Doering T.L."/>
            <person name="Donlin M.J."/>
            <person name="D'Souza C.A."/>
            <person name="Fox D.S."/>
            <person name="Grinberg V."/>
            <person name="Fu J."/>
            <person name="Fukushima M."/>
            <person name="Haas B.J."/>
            <person name="Huang J.C."/>
            <person name="Janbon G."/>
            <person name="Jones S.J.M."/>
            <person name="Koo H.L."/>
            <person name="Krzywinski M.I."/>
            <person name="Kwon-Chung K.J."/>
            <person name="Lengeler K.B."/>
            <person name="Maiti R."/>
            <person name="Marra M.A."/>
            <person name="Marra R.E."/>
            <person name="Mathewson C.A."/>
            <person name="Mitchell T.G."/>
            <person name="Pertea M."/>
            <person name="Riggs F.R."/>
            <person name="Salzberg S.L."/>
            <person name="Schein J.E."/>
            <person name="Shvartsbeyn A."/>
            <person name="Shin H."/>
            <person name="Shumway M."/>
            <person name="Specht C.A."/>
            <person name="Suh B.B."/>
            <person name="Tenney A."/>
            <person name="Utterback T.R."/>
            <person name="Wickes B.L."/>
            <person name="Wortman J.R."/>
            <person name="Wye N.H."/>
            <person name="Kronstad J.W."/>
            <person name="Lodge J.K."/>
            <person name="Heitman J."/>
            <person name="Davis R.W."/>
            <person name="Fraser C.M."/>
            <person name="Hyman R.W."/>
        </authorList>
    </citation>
    <scope>NUCLEOTIDE SEQUENCE [LARGE SCALE GENOMIC DNA]</scope>
    <source>
        <strain>B-3501A</strain>
    </source>
</reference>
<feature type="chain" id="PRO_0000410072" description="Protein EFR3">
    <location>
        <begin position="1"/>
        <end position="1011"/>
    </location>
</feature>
<feature type="region of interest" description="Disordered" evidence="1">
    <location>
        <begin position="478"/>
        <end position="510"/>
    </location>
</feature>
<feature type="region of interest" description="Disordered" evidence="1">
    <location>
        <begin position="571"/>
        <end position="636"/>
    </location>
</feature>
<feature type="region of interest" description="Disordered" evidence="1">
    <location>
        <begin position="892"/>
        <end position="927"/>
    </location>
</feature>
<feature type="region of interest" description="Disordered" evidence="1">
    <location>
        <begin position="949"/>
        <end position="1011"/>
    </location>
</feature>
<feature type="compositionally biased region" description="Pro residues" evidence="1">
    <location>
        <begin position="489"/>
        <end position="501"/>
    </location>
</feature>
<feature type="compositionally biased region" description="Polar residues" evidence="1">
    <location>
        <begin position="576"/>
        <end position="592"/>
    </location>
</feature>
<feature type="compositionally biased region" description="Polar residues" evidence="1">
    <location>
        <begin position="609"/>
        <end position="625"/>
    </location>
</feature>
<feature type="compositionally biased region" description="Polar residues" evidence="1">
    <location>
        <begin position="910"/>
        <end position="922"/>
    </location>
</feature>
<proteinExistence type="inferred from homology"/>
<comment type="similarity">
    <text evidence="2">Belongs to the EFR3 family.</text>
</comment>
<comment type="sequence caution" evidence="2">
    <conflict type="erroneous gene model prediction">
        <sequence resource="EMBL-CDS" id="EAL20523"/>
    </conflict>
</comment>
<gene>
    <name type="primary">EFR3</name>
    <name type="ordered locus">CNBE4430</name>
</gene>
<name>EFR3_CRYNB</name>
<evidence type="ECO:0000256" key="1">
    <source>
        <dbReference type="SAM" id="MobiDB-lite"/>
    </source>
</evidence>
<evidence type="ECO:0000305" key="2"/>
<sequence>MGCIPCRTLQPEVAHLNACYPPPKALLTAGPEYRPLAQDLSKLTYFATNKPSKLAKIGEELEKRVAQESARASSGNHKYRASLLISLAILRALLTECKRDIALFARSTLRVIDSSLDVRVYQRGGIDLEVVGRAAAAFIAYTTYTDGSAVGVDDTLTKTYFEILRKFGSMATVSLLDSSEKPDTEQQNRTRLIALAGLNGAATSDAIFASTRDFPRQIDLIIPPLLVNTFEGQISELKLESAKIGMDASPSPFFSEFAAKGPVAQRRAPSLHAHIPGEKGPTSADVVSAALRSLHSLLQQCNVTQASQIIDRLVMFLDKHGWQYAERDCFVAEQVTAWIPLQYRFIVPTRLVEVLMDLQDRTPTPKHTSALAMVTTILNSTTSLVGLGVTDLLQHLVSLIIRRIHFDLRDALLPSLVQCVSSLGTHIYYADQINDIVEELALRIAEIPSSDTARSEIIRVLTCCISGVMIMTDAADNDAESKQGNNVPQPTPSTPGSPTPPNKGKLPAPAETPFLTPLFEYLRPQAHRSSRRNPISPEVWQETLPLLCEADYSVRSTYARALILFLETEMQRGPTPRTTPASGGSGSETATPNREKGVSFKVTEPTPGETATQTQSGSGATTPPKRNSRSHRPSLPLNRLQSYTHLSSFDNVATPLDFAAALRILDAMHMVVPVAALVTGAPMLLAVDRDAGNELVRRPGDGRAGAWVLERKRAIRELVSLVWRRIADRWGIVEIDDLANKALASLPEPYLIPPYPVPDSPPVFLSLPEEPVSFIQHTLEGESSSTAKPLLDQDTLLDALVKSKTVQAAKQMDEAGLKRLFDGKWSVEQAIKDSMERFSSANLRPDDDSHYNAASALLMSMNNASYQSVNGQRLSRTIDVTDLRDALGGRVDTVSTSGAPSIASFDDSFHSQSAPRSSLQSRRMNKDSDVKEILKDIFKDKKKGTKAPKGIVVNRVKSASASEEARTSTGDENGLGMSGMTQGDGATGHKVVTDPPLDLSLGRPVDVPSSS</sequence>
<protein>
    <recommendedName>
        <fullName>Protein EFR3</fullName>
    </recommendedName>
</protein>